<reference key="1">
    <citation type="journal article" date="2010" name="Genome Biol. Evol.">
        <title>Continuing evolution of Burkholderia mallei through genome reduction and large-scale rearrangements.</title>
        <authorList>
            <person name="Losada L."/>
            <person name="Ronning C.M."/>
            <person name="DeShazer D."/>
            <person name="Woods D."/>
            <person name="Fedorova N."/>
            <person name="Kim H.S."/>
            <person name="Shabalina S.A."/>
            <person name="Pearson T.R."/>
            <person name="Brinkac L."/>
            <person name="Tan P."/>
            <person name="Nandi T."/>
            <person name="Crabtree J."/>
            <person name="Badger J."/>
            <person name="Beckstrom-Sternberg S."/>
            <person name="Saqib M."/>
            <person name="Schutzer S.E."/>
            <person name="Keim P."/>
            <person name="Nierman W.C."/>
        </authorList>
    </citation>
    <scope>NUCLEOTIDE SEQUENCE [LARGE SCALE GENOMIC DNA]</scope>
    <source>
        <strain>1106a</strain>
    </source>
</reference>
<evidence type="ECO:0000255" key="1">
    <source>
        <dbReference type="HAMAP-Rule" id="MF_01320"/>
    </source>
</evidence>
<evidence type="ECO:0000256" key="2">
    <source>
        <dbReference type="SAM" id="MobiDB-lite"/>
    </source>
</evidence>
<evidence type="ECO:0000305" key="3"/>
<gene>
    <name evidence="1" type="primary">rplB</name>
    <name type="ordered locus">BURPS1106A_3801</name>
</gene>
<sequence length="275" mass="30258">MAIVKVKPTSPGRRAMVKVVNKDLHKGKPHAALLDTQSSKAGRNNNGRITTRHQGGGHKQHYRVIDFRRTKDGIPAKVERLEYDPNRSANIALVLYADGERRYIIAPKGVTVGQQLMSGSEAPIRAGNTLPIRNIPVGTTIHCIEMLPGKGAQMARSAGTSAMLLAREGLYAQVRLRSGEIRRVHIECRATIGEVGNEEHSLRQIGKAGANRWRGIRPTVRGVAMNPIDHPHGGGEGRTAAGRDPVSPWGTPTKGFRTRRNKRTTTMIVQRRHKR</sequence>
<feature type="chain" id="PRO_0000309886" description="Large ribosomal subunit protein uL2">
    <location>
        <begin position="1"/>
        <end position="275"/>
    </location>
</feature>
<feature type="region of interest" description="Disordered" evidence="2">
    <location>
        <begin position="38"/>
        <end position="60"/>
    </location>
</feature>
<feature type="region of interest" description="Disordered" evidence="2">
    <location>
        <begin position="224"/>
        <end position="257"/>
    </location>
</feature>
<feature type="compositionally biased region" description="Polar residues" evidence="2">
    <location>
        <begin position="38"/>
        <end position="53"/>
    </location>
</feature>
<accession>A3P0B0</accession>
<keyword id="KW-0687">Ribonucleoprotein</keyword>
<keyword id="KW-0689">Ribosomal protein</keyword>
<keyword id="KW-0694">RNA-binding</keyword>
<keyword id="KW-0699">rRNA-binding</keyword>
<comment type="function">
    <text evidence="1">One of the primary rRNA binding proteins. Required for association of the 30S and 50S subunits to form the 70S ribosome, for tRNA binding and peptide bond formation. It has been suggested to have peptidyltransferase activity; this is somewhat controversial. Makes several contacts with the 16S rRNA in the 70S ribosome.</text>
</comment>
<comment type="subunit">
    <text evidence="1">Part of the 50S ribosomal subunit. Forms a bridge to the 30S subunit in the 70S ribosome.</text>
</comment>
<comment type="similarity">
    <text evidence="1">Belongs to the universal ribosomal protein uL2 family.</text>
</comment>
<proteinExistence type="inferred from homology"/>
<organism>
    <name type="scientific">Burkholderia pseudomallei (strain 1106a)</name>
    <dbReference type="NCBI Taxonomy" id="357348"/>
    <lineage>
        <taxon>Bacteria</taxon>
        <taxon>Pseudomonadati</taxon>
        <taxon>Pseudomonadota</taxon>
        <taxon>Betaproteobacteria</taxon>
        <taxon>Burkholderiales</taxon>
        <taxon>Burkholderiaceae</taxon>
        <taxon>Burkholderia</taxon>
        <taxon>pseudomallei group</taxon>
    </lineage>
</organism>
<protein>
    <recommendedName>
        <fullName evidence="1">Large ribosomal subunit protein uL2</fullName>
    </recommendedName>
    <alternativeName>
        <fullName evidence="3">50S ribosomal protein L2</fullName>
    </alternativeName>
</protein>
<dbReference type="EMBL" id="CP000572">
    <property type="protein sequence ID" value="ABN90584.1"/>
    <property type="molecule type" value="Genomic_DNA"/>
</dbReference>
<dbReference type="RefSeq" id="WP_004199274.1">
    <property type="nucleotide sequence ID" value="NC_009076.1"/>
</dbReference>
<dbReference type="SMR" id="A3P0B0"/>
<dbReference type="GeneID" id="93061829"/>
<dbReference type="KEGG" id="bpl:BURPS1106A_3801"/>
<dbReference type="HOGENOM" id="CLU_036235_2_1_4"/>
<dbReference type="Proteomes" id="UP000006738">
    <property type="component" value="Chromosome I"/>
</dbReference>
<dbReference type="GO" id="GO:0015934">
    <property type="term" value="C:large ribosomal subunit"/>
    <property type="evidence" value="ECO:0007669"/>
    <property type="project" value="InterPro"/>
</dbReference>
<dbReference type="GO" id="GO:0019843">
    <property type="term" value="F:rRNA binding"/>
    <property type="evidence" value="ECO:0007669"/>
    <property type="project" value="UniProtKB-UniRule"/>
</dbReference>
<dbReference type="GO" id="GO:0003735">
    <property type="term" value="F:structural constituent of ribosome"/>
    <property type="evidence" value="ECO:0007669"/>
    <property type="project" value="InterPro"/>
</dbReference>
<dbReference type="GO" id="GO:0016740">
    <property type="term" value="F:transferase activity"/>
    <property type="evidence" value="ECO:0007669"/>
    <property type="project" value="InterPro"/>
</dbReference>
<dbReference type="GO" id="GO:0002181">
    <property type="term" value="P:cytoplasmic translation"/>
    <property type="evidence" value="ECO:0007669"/>
    <property type="project" value="TreeGrafter"/>
</dbReference>
<dbReference type="FunFam" id="2.30.30.30:FF:000001">
    <property type="entry name" value="50S ribosomal protein L2"/>
    <property type="match status" value="1"/>
</dbReference>
<dbReference type="FunFam" id="2.40.50.140:FF:000003">
    <property type="entry name" value="50S ribosomal protein L2"/>
    <property type="match status" value="1"/>
</dbReference>
<dbReference type="FunFam" id="4.10.950.10:FF:000001">
    <property type="entry name" value="50S ribosomal protein L2"/>
    <property type="match status" value="1"/>
</dbReference>
<dbReference type="Gene3D" id="2.30.30.30">
    <property type="match status" value="1"/>
</dbReference>
<dbReference type="Gene3D" id="2.40.50.140">
    <property type="entry name" value="Nucleic acid-binding proteins"/>
    <property type="match status" value="1"/>
</dbReference>
<dbReference type="Gene3D" id="4.10.950.10">
    <property type="entry name" value="Ribosomal protein L2, domain 3"/>
    <property type="match status" value="1"/>
</dbReference>
<dbReference type="HAMAP" id="MF_01320_B">
    <property type="entry name" value="Ribosomal_uL2_B"/>
    <property type="match status" value="1"/>
</dbReference>
<dbReference type="InterPro" id="IPR012340">
    <property type="entry name" value="NA-bd_OB-fold"/>
</dbReference>
<dbReference type="InterPro" id="IPR014722">
    <property type="entry name" value="Rib_uL2_dom2"/>
</dbReference>
<dbReference type="InterPro" id="IPR002171">
    <property type="entry name" value="Ribosomal_uL2"/>
</dbReference>
<dbReference type="InterPro" id="IPR005880">
    <property type="entry name" value="Ribosomal_uL2_bac/org-type"/>
</dbReference>
<dbReference type="InterPro" id="IPR022669">
    <property type="entry name" value="Ribosomal_uL2_C"/>
</dbReference>
<dbReference type="InterPro" id="IPR022671">
    <property type="entry name" value="Ribosomal_uL2_CS"/>
</dbReference>
<dbReference type="InterPro" id="IPR014726">
    <property type="entry name" value="Ribosomal_uL2_dom3"/>
</dbReference>
<dbReference type="InterPro" id="IPR022666">
    <property type="entry name" value="Ribosomal_uL2_RNA-bd_dom"/>
</dbReference>
<dbReference type="InterPro" id="IPR008991">
    <property type="entry name" value="Translation_prot_SH3-like_sf"/>
</dbReference>
<dbReference type="NCBIfam" id="TIGR01171">
    <property type="entry name" value="rplB_bact"/>
    <property type="match status" value="1"/>
</dbReference>
<dbReference type="PANTHER" id="PTHR13691:SF5">
    <property type="entry name" value="LARGE RIBOSOMAL SUBUNIT PROTEIN UL2M"/>
    <property type="match status" value="1"/>
</dbReference>
<dbReference type="PANTHER" id="PTHR13691">
    <property type="entry name" value="RIBOSOMAL PROTEIN L2"/>
    <property type="match status" value="1"/>
</dbReference>
<dbReference type="Pfam" id="PF00181">
    <property type="entry name" value="Ribosomal_L2"/>
    <property type="match status" value="1"/>
</dbReference>
<dbReference type="Pfam" id="PF03947">
    <property type="entry name" value="Ribosomal_L2_C"/>
    <property type="match status" value="1"/>
</dbReference>
<dbReference type="PIRSF" id="PIRSF002158">
    <property type="entry name" value="Ribosomal_L2"/>
    <property type="match status" value="1"/>
</dbReference>
<dbReference type="SMART" id="SM01383">
    <property type="entry name" value="Ribosomal_L2"/>
    <property type="match status" value="1"/>
</dbReference>
<dbReference type="SMART" id="SM01382">
    <property type="entry name" value="Ribosomal_L2_C"/>
    <property type="match status" value="1"/>
</dbReference>
<dbReference type="SUPFAM" id="SSF50249">
    <property type="entry name" value="Nucleic acid-binding proteins"/>
    <property type="match status" value="1"/>
</dbReference>
<dbReference type="SUPFAM" id="SSF50104">
    <property type="entry name" value="Translation proteins SH3-like domain"/>
    <property type="match status" value="1"/>
</dbReference>
<dbReference type="PROSITE" id="PS00467">
    <property type="entry name" value="RIBOSOMAL_L2"/>
    <property type="match status" value="1"/>
</dbReference>
<name>RL2_BURP0</name>